<gene>
    <name evidence="1" type="primary">prcA</name>
    <name type="ordered locus">Strop_2245</name>
</gene>
<sequence>MAMQFYASPEQIMRDRSELARKGIARGRSAVVLSYAGGVLFVAENLSSALHKVGEIYDRIGFAAVGRYNEFENLRRAGVRMADLNGLSYDRRDVTGRALANSFAQTLGAIFTEQSKPFEVEICVAQVGVTAEDDELYRLTYDGSVNDEPGRMAMGGQAEAIAGALKSNHRSDMSLGDAVKVAVRALGSVGGEGGAARTIAADQLEVAILDRHRDGRTFRRVTGAALTALLDDGAAAASTDAPAAAADSADVEERPDSEAP</sequence>
<dbReference type="EMBL" id="CP000667">
    <property type="protein sequence ID" value="ABP54695.1"/>
    <property type="molecule type" value="Genomic_DNA"/>
</dbReference>
<dbReference type="RefSeq" id="WP_011906125.1">
    <property type="nucleotide sequence ID" value="NC_009380.1"/>
</dbReference>
<dbReference type="SMR" id="A4X745"/>
<dbReference type="STRING" id="369723.Strop_2245"/>
<dbReference type="MEROPS" id="T01.980"/>
<dbReference type="KEGG" id="stp:Strop_2245"/>
<dbReference type="PATRIC" id="fig|369723.5.peg.2303"/>
<dbReference type="eggNOG" id="COG0638">
    <property type="taxonomic scope" value="Bacteria"/>
</dbReference>
<dbReference type="HOGENOM" id="CLU_071031_0_0_11"/>
<dbReference type="UniPathway" id="UPA00997"/>
<dbReference type="Proteomes" id="UP000000235">
    <property type="component" value="Chromosome"/>
</dbReference>
<dbReference type="GO" id="GO:0005737">
    <property type="term" value="C:cytoplasm"/>
    <property type="evidence" value="ECO:0007669"/>
    <property type="project" value="UniProtKB-SubCell"/>
</dbReference>
<dbReference type="GO" id="GO:0019773">
    <property type="term" value="C:proteasome core complex, alpha-subunit complex"/>
    <property type="evidence" value="ECO:0007669"/>
    <property type="project" value="UniProtKB-UniRule"/>
</dbReference>
<dbReference type="GO" id="GO:0004298">
    <property type="term" value="F:threonine-type endopeptidase activity"/>
    <property type="evidence" value="ECO:0007669"/>
    <property type="project" value="InterPro"/>
</dbReference>
<dbReference type="GO" id="GO:0019941">
    <property type="term" value="P:modification-dependent protein catabolic process"/>
    <property type="evidence" value="ECO:0007669"/>
    <property type="project" value="UniProtKB-UniRule"/>
</dbReference>
<dbReference type="GO" id="GO:0010498">
    <property type="term" value="P:proteasomal protein catabolic process"/>
    <property type="evidence" value="ECO:0007669"/>
    <property type="project" value="UniProtKB-UniRule"/>
</dbReference>
<dbReference type="CDD" id="cd01906">
    <property type="entry name" value="proteasome_protease_HslV"/>
    <property type="match status" value="1"/>
</dbReference>
<dbReference type="Gene3D" id="3.60.20.10">
    <property type="entry name" value="Glutamine Phosphoribosylpyrophosphate, subunit 1, domain 1"/>
    <property type="match status" value="1"/>
</dbReference>
<dbReference type="HAMAP" id="MF_00289_B">
    <property type="entry name" value="Proteasome_A_B"/>
    <property type="match status" value="1"/>
</dbReference>
<dbReference type="InterPro" id="IPR029055">
    <property type="entry name" value="Ntn_hydrolases_N"/>
</dbReference>
<dbReference type="InterPro" id="IPR050115">
    <property type="entry name" value="Proteasome_alpha"/>
</dbReference>
<dbReference type="InterPro" id="IPR023332">
    <property type="entry name" value="Proteasome_alpha-type"/>
</dbReference>
<dbReference type="InterPro" id="IPR022296">
    <property type="entry name" value="Proteasome_asu_bac"/>
</dbReference>
<dbReference type="InterPro" id="IPR001353">
    <property type="entry name" value="Proteasome_sua/b"/>
</dbReference>
<dbReference type="NCBIfam" id="TIGR03691">
    <property type="entry name" value="20S_bact_alpha"/>
    <property type="match status" value="1"/>
</dbReference>
<dbReference type="PANTHER" id="PTHR11599">
    <property type="entry name" value="PROTEASOME SUBUNIT ALPHA/BETA"/>
    <property type="match status" value="1"/>
</dbReference>
<dbReference type="Pfam" id="PF00227">
    <property type="entry name" value="Proteasome"/>
    <property type="match status" value="1"/>
</dbReference>
<dbReference type="SUPFAM" id="SSF56235">
    <property type="entry name" value="N-terminal nucleophile aminohydrolases (Ntn hydrolases)"/>
    <property type="match status" value="1"/>
</dbReference>
<dbReference type="PROSITE" id="PS51475">
    <property type="entry name" value="PROTEASOME_ALPHA_2"/>
    <property type="match status" value="1"/>
</dbReference>
<reference key="1">
    <citation type="journal article" date="2007" name="Proc. Natl. Acad. Sci. U.S.A.">
        <title>Genome sequencing reveals complex secondary metabolome in the marine actinomycete Salinispora tropica.</title>
        <authorList>
            <person name="Udwary D.W."/>
            <person name="Zeigler L."/>
            <person name="Asolkar R.N."/>
            <person name="Singan V."/>
            <person name="Lapidus A."/>
            <person name="Fenical W."/>
            <person name="Jensen P.R."/>
            <person name="Moore B.S."/>
        </authorList>
    </citation>
    <scope>NUCLEOTIDE SEQUENCE [LARGE SCALE GENOMIC DNA]</scope>
    <source>
        <strain>ATCC BAA-916 / DSM 44818 / JCM 13857 / NBRC 105044 / CNB-440</strain>
    </source>
</reference>
<proteinExistence type="inferred from homology"/>
<feature type="chain" id="PRO_0000397173" description="Proteasome subunit alpha">
    <location>
        <begin position="1"/>
        <end position="260"/>
    </location>
</feature>
<feature type="region of interest" description="Disordered" evidence="2">
    <location>
        <begin position="237"/>
        <end position="260"/>
    </location>
</feature>
<feature type="compositionally biased region" description="Low complexity" evidence="2">
    <location>
        <begin position="237"/>
        <end position="248"/>
    </location>
</feature>
<feature type="compositionally biased region" description="Basic and acidic residues" evidence="2">
    <location>
        <begin position="251"/>
        <end position="260"/>
    </location>
</feature>
<accession>A4X745</accession>
<organism>
    <name type="scientific">Salinispora tropica (strain ATCC BAA-916 / DSM 44818 / JCM 13857 / NBRC 105044 / CNB-440)</name>
    <dbReference type="NCBI Taxonomy" id="369723"/>
    <lineage>
        <taxon>Bacteria</taxon>
        <taxon>Bacillati</taxon>
        <taxon>Actinomycetota</taxon>
        <taxon>Actinomycetes</taxon>
        <taxon>Micromonosporales</taxon>
        <taxon>Micromonosporaceae</taxon>
        <taxon>Salinispora</taxon>
    </lineage>
</organism>
<evidence type="ECO:0000255" key="1">
    <source>
        <dbReference type="HAMAP-Rule" id="MF_00289"/>
    </source>
</evidence>
<evidence type="ECO:0000256" key="2">
    <source>
        <dbReference type="SAM" id="MobiDB-lite"/>
    </source>
</evidence>
<keyword id="KW-0963">Cytoplasm</keyword>
<keyword id="KW-0647">Proteasome</keyword>
<keyword id="KW-1185">Reference proteome</keyword>
<protein>
    <recommendedName>
        <fullName evidence="1">Proteasome subunit alpha</fullName>
    </recommendedName>
    <alternativeName>
        <fullName evidence="1">20S proteasome alpha subunit</fullName>
    </alternativeName>
    <alternativeName>
        <fullName evidence="1">Proteasome core protein PrcA</fullName>
    </alternativeName>
</protein>
<name>PSA_SALTO</name>
<comment type="function">
    <text evidence="1">Component of the proteasome core, a large protease complex with broad specificity involved in protein degradation.</text>
</comment>
<comment type="activity regulation">
    <text evidence="1">The formation of the proteasomal ATPase ARC-20S proteasome complex, likely via the docking of the C-termini of ARC into the intersubunit pockets in the alpha-rings, may trigger opening of the gate for substrate entry. Interconversion between the open-gate and close-gate conformations leads to a dynamic regulation of the 20S proteasome proteolysis activity.</text>
</comment>
<comment type="pathway">
    <text evidence="1">Protein degradation; proteasomal Pup-dependent pathway.</text>
</comment>
<comment type="subunit">
    <text evidence="1">The 20S proteasome core is composed of 14 alpha and 14 beta subunits that assemble into four stacked heptameric rings, resulting in a barrel-shaped structure. The two inner rings, each composed of seven catalytic beta subunits, are sandwiched by two outer rings, each composed of seven alpha subunits. The catalytic chamber with the active sites is on the inside of the barrel. Has a gated structure, the ends of the cylinder being occluded by the N-termini of the alpha-subunits. Is capped by the proteasome-associated ATPase, ARC.</text>
</comment>
<comment type="subcellular location">
    <subcellularLocation>
        <location evidence="1">Cytoplasm</location>
    </subcellularLocation>
</comment>
<comment type="similarity">
    <text evidence="1">Belongs to the peptidase T1A family.</text>
</comment>